<reference key="1">
    <citation type="submission" date="2007-09" db="EMBL/GenBank/DDBJ databases">
        <title>Complete genome sequencing of Rickettsia bellii.</title>
        <authorList>
            <person name="Madan A."/>
            <person name="Lee H."/>
            <person name="Madan A."/>
            <person name="Yoon J.-G."/>
            <person name="Ryu G.-Y."/>
            <person name="Dasch G."/>
            <person name="Ereemeva M."/>
        </authorList>
    </citation>
    <scope>NUCLEOTIDE SEQUENCE [LARGE SCALE GENOMIC DNA]</scope>
    <source>
        <strain>OSU 85-389</strain>
    </source>
</reference>
<gene>
    <name evidence="1" type="primary">rbfA</name>
    <name type="ordered locus">A1I_01075</name>
</gene>
<evidence type="ECO:0000255" key="1">
    <source>
        <dbReference type="HAMAP-Rule" id="MF_00003"/>
    </source>
</evidence>
<organism>
    <name type="scientific">Rickettsia bellii (strain OSU 85-389)</name>
    <dbReference type="NCBI Taxonomy" id="391896"/>
    <lineage>
        <taxon>Bacteria</taxon>
        <taxon>Pseudomonadati</taxon>
        <taxon>Pseudomonadota</taxon>
        <taxon>Alphaproteobacteria</taxon>
        <taxon>Rickettsiales</taxon>
        <taxon>Rickettsiaceae</taxon>
        <taxon>Rickettsieae</taxon>
        <taxon>Rickettsia</taxon>
        <taxon>belli group</taxon>
    </lineage>
</organism>
<keyword id="KW-0963">Cytoplasm</keyword>
<keyword id="KW-0690">Ribosome biogenesis</keyword>
<comment type="function">
    <text evidence="1">One of several proteins that assist in the late maturation steps of the functional core of the 30S ribosomal subunit. Associates with free 30S ribosomal subunits (but not with 30S subunits that are part of 70S ribosomes or polysomes). Required for efficient processing of 16S rRNA. May interact with the 5'-terminal helix region of 16S rRNA.</text>
</comment>
<comment type="subunit">
    <text evidence="1">Monomer. Binds 30S ribosomal subunits, but not 50S ribosomal subunits or 70S ribosomes.</text>
</comment>
<comment type="subcellular location">
    <subcellularLocation>
        <location evidence="1">Cytoplasm</location>
    </subcellularLocation>
</comment>
<comment type="similarity">
    <text evidence="1">Belongs to the RbfA family.</text>
</comment>
<proteinExistence type="inferred from homology"/>
<name>RBFA_RICB8</name>
<feature type="chain" id="PRO_1000000193" description="Ribosome-binding factor A">
    <location>
        <begin position="1"/>
        <end position="123"/>
    </location>
</feature>
<sequence length="123" mass="14190">MKKLTSENSHRQQKVASIINEALIEILHRGKMLDPRLYDCPLTITKIIVTADLKIANCYFLPFNTKLTPQEITESLNNSKNAIRNFVTGKINMKYSPDIRFHYDHGFDNALKVEQLLKDTNNI</sequence>
<protein>
    <recommendedName>
        <fullName evidence="1">Ribosome-binding factor A</fullName>
    </recommendedName>
</protein>
<accession>A8GUU4</accession>
<dbReference type="EMBL" id="CP000849">
    <property type="protein sequence ID" value="ABV78611.1"/>
    <property type="molecule type" value="Genomic_DNA"/>
</dbReference>
<dbReference type="RefSeq" id="WP_011477891.1">
    <property type="nucleotide sequence ID" value="NC_009883.1"/>
</dbReference>
<dbReference type="SMR" id="A8GUU4"/>
<dbReference type="KEGG" id="rbo:A1I_01075"/>
<dbReference type="HOGENOM" id="CLU_089475_1_0_5"/>
<dbReference type="GO" id="GO:0005829">
    <property type="term" value="C:cytosol"/>
    <property type="evidence" value="ECO:0007669"/>
    <property type="project" value="TreeGrafter"/>
</dbReference>
<dbReference type="GO" id="GO:0043024">
    <property type="term" value="F:ribosomal small subunit binding"/>
    <property type="evidence" value="ECO:0007669"/>
    <property type="project" value="TreeGrafter"/>
</dbReference>
<dbReference type="GO" id="GO:0030490">
    <property type="term" value="P:maturation of SSU-rRNA"/>
    <property type="evidence" value="ECO:0007669"/>
    <property type="project" value="UniProtKB-UniRule"/>
</dbReference>
<dbReference type="Gene3D" id="3.30.300.20">
    <property type="match status" value="1"/>
</dbReference>
<dbReference type="HAMAP" id="MF_00003">
    <property type="entry name" value="RbfA"/>
    <property type="match status" value="1"/>
</dbReference>
<dbReference type="InterPro" id="IPR015946">
    <property type="entry name" value="KH_dom-like_a/b"/>
</dbReference>
<dbReference type="InterPro" id="IPR000238">
    <property type="entry name" value="RbfA"/>
</dbReference>
<dbReference type="InterPro" id="IPR023799">
    <property type="entry name" value="RbfA_dom_sf"/>
</dbReference>
<dbReference type="InterPro" id="IPR020053">
    <property type="entry name" value="Ribosome-bd_factorA_CS"/>
</dbReference>
<dbReference type="NCBIfam" id="NF001799">
    <property type="entry name" value="PRK00521.2-2"/>
    <property type="match status" value="1"/>
</dbReference>
<dbReference type="NCBIfam" id="TIGR00082">
    <property type="entry name" value="rbfA"/>
    <property type="match status" value="1"/>
</dbReference>
<dbReference type="PANTHER" id="PTHR33515">
    <property type="entry name" value="RIBOSOME-BINDING FACTOR A, CHLOROPLASTIC-RELATED"/>
    <property type="match status" value="1"/>
</dbReference>
<dbReference type="PANTHER" id="PTHR33515:SF1">
    <property type="entry name" value="RIBOSOME-BINDING FACTOR A, CHLOROPLASTIC-RELATED"/>
    <property type="match status" value="1"/>
</dbReference>
<dbReference type="Pfam" id="PF02033">
    <property type="entry name" value="RBFA"/>
    <property type="match status" value="1"/>
</dbReference>
<dbReference type="SUPFAM" id="SSF89919">
    <property type="entry name" value="Ribosome-binding factor A, RbfA"/>
    <property type="match status" value="1"/>
</dbReference>
<dbReference type="PROSITE" id="PS01319">
    <property type="entry name" value="RBFA"/>
    <property type="match status" value="1"/>
</dbReference>